<proteinExistence type="evidence at protein level"/>
<evidence type="ECO:0000250" key="1">
    <source>
        <dbReference type="UniProtKB" id="Q96KN7"/>
    </source>
</evidence>
<evidence type="ECO:0000255" key="2"/>
<evidence type="ECO:0000255" key="3">
    <source>
        <dbReference type="PROSITE-ProRule" id="PRU00041"/>
    </source>
</evidence>
<evidence type="ECO:0000256" key="4">
    <source>
        <dbReference type="SAM" id="MobiDB-lite"/>
    </source>
</evidence>
<evidence type="ECO:0000269" key="5">
    <source>
    </source>
</evidence>
<evidence type="ECO:0000269" key="6">
    <source>
    </source>
</evidence>
<evidence type="ECO:0000269" key="7">
    <source>
    </source>
</evidence>
<evidence type="ECO:0000269" key="8">
    <source>
    </source>
</evidence>
<evidence type="ECO:0000269" key="9">
    <source>
    </source>
</evidence>
<evidence type="ECO:0000269" key="10">
    <source>
    </source>
</evidence>
<evidence type="ECO:0000303" key="11">
    <source>
    </source>
</evidence>
<evidence type="ECO:0000303" key="12">
    <source>
    </source>
</evidence>
<evidence type="ECO:0000305" key="13"/>
<protein>
    <recommendedName>
        <fullName>X-linked retinitis pigmentosa GTPase regulator-interacting protein 1</fullName>
        <shortName>RPGR-interacting protein 1</shortName>
    </recommendedName>
</protein>
<feature type="chain" id="PRO_0000097433" description="X-linked retinitis pigmentosa GTPase regulator-interacting protein 1">
    <location>
        <begin position="1"/>
        <end position="1331"/>
    </location>
</feature>
<feature type="domain" description="C2" evidence="3">
    <location>
        <begin position="745"/>
        <end position="870"/>
    </location>
</feature>
<feature type="region of interest" description="Disordered" evidence="4">
    <location>
        <begin position="1"/>
        <end position="165"/>
    </location>
</feature>
<feature type="region of interest" description="Disordered" evidence="4">
    <location>
        <begin position="183"/>
        <end position="220"/>
    </location>
</feature>
<feature type="region of interest" description="Disordered" evidence="4">
    <location>
        <begin position="351"/>
        <end position="374"/>
    </location>
</feature>
<feature type="region of interest" description="Disordered" evidence="4">
    <location>
        <begin position="899"/>
        <end position="1057"/>
    </location>
</feature>
<feature type="region of interest" description="Disordered" evidence="4">
    <location>
        <begin position="1088"/>
        <end position="1146"/>
    </location>
</feature>
<feature type="region of interest" description="Interaction with RPGR" evidence="1">
    <location>
        <begin position="1136"/>
        <end position="1326"/>
    </location>
</feature>
<feature type="coiled-coil region" evidence="2">
    <location>
        <begin position="236"/>
        <end position="352"/>
    </location>
</feature>
<feature type="coiled-coil region" evidence="2">
    <location>
        <begin position="498"/>
        <end position="546"/>
    </location>
</feature>
<feature type="coiled-coil region" evidence="2">
    <location>
        <begin position="908"/>
        <end position="999"/>
    </location>
</feature>
<feature type="compositionally biased region" description="Basic and acidic residues" evidence="4">
    <location>
        <begin position="41"/>
        <end position="67"/>
    </location>
</feature>
<feature type="compositionally biased region" description="Polar residues" evidence="4">
    <location>
        <begin position="77"/>
        <end position="86"/>
    </location>
</feature>
<feature type="compositionally biased region" description="Polar residues" evidence="4">
    <location>
        <begin position="183"/>
        <end position="193"/>
    </location>
</feature>
<feature type="compositionally biased region" description="Basic and acidic residues" evidence="4">
    <location>
        <begin position="194"/>
        <end position="220"/>
    </location>
</feature>
<feature type="compositionally biased region" description="Polar residues" evidence="4">
    <location>
        <begin position="351"/>
        <end position="367"/>
    </location>
</feature>
<feature type="compositionally biased region" description="Acidic residues" evidence="4">
    <location>
        <begin position="910"/>
        <end position="988"/>
    </location>
</feature>
<feature type="compositionally biased region" description="Basic and acidic residues" evidence="4">
    <location>
        <begin position="1022"/>
        <end position="1039"/>
    </location>
</feature>
<feature type="compositionally biased region" description="Basic and acidic residues" evidence="4">
    <location>
        <begin position="1088"/>
        <end position="1115"/>
    </location>
</feature>
<feature type="compositionally biased region" description="Polar residues" evidence="4">
    <location>
        <begin position="1129"/>
        <end position="1141"/>
    </location>
</feature>
<feature type="splice variant" id="VSP_009529" description="In isoform 5." evidence="12">
    <location>
        <begin position="1"/>
        <end position="1074"/>
    </location>
</feature>
<feature type="splice variant" id="VSP_009528" description="In isoform 3 and isoform 4." evidence="12">
    <location>
        <begin position="1"/>
        <end position="319"/>
    </location>
</feature>
<feature type="splice variant" id="VSP_009530" description="In isoform 3 and isoform 4." evidence="12">
    <original>EFQVRVEDLEKERKLLSDSYDRLLEN</original>
    <variation>MLKLCNKDAGSYSFEDPSDTEPGVFS</variation>
    <location>
        <begin position="320"/>
        <end position="345"/>
    </location>
</feature>
<feature type="splice variant" id="VSP_009531" description="In isoform 2 and isoform 3." evidence="11 12">
    <location>
        <position position="399"/>
    </location>
</feature>
<feature type="splice variant" id="VSP_009533" description="In isoform 4." evidence="12">
    <location>
        <begin position="541"/>
        <end position="867"/>
    </location>
</feature>
<feature type="splice variant" id="VSP_009534" description="In isoform 3." evidence="12">
    <location>
        <begin position="552"/>
        <end position="867"/>
    </location>
</feature>
<feature type="splice variant" id="VSP_009532" description="In isoform 2." evidence="11">
    <original>EQL</original>
    <variation>GKS</variation>
    <location>
        <begin position="552"/>
        <end position="554"/>
    </location>
</feature>
<feature type="splice variant" id="VSP_009535" description="In isoform 2." evidence="11">
    <location>
        <begin position="555"/>
        <end position="1331"/>
    </location>
</feature>
<feature type="sequence conflict" description="In Ref. 2; BAB29938." evidence="13" ref="2">
    <original>V</original>
    <variation>A</variation>
    <location>
        <position position="921"/>
    </location>
</feature>
<feature type="sequence conflict" description="In Ref. 2; BAB29685." evidence="13" ref="2">
    <original>Q</original>
    <variation>H</variation>
    <location>
        <position position="1096"/>
    </location>
</feature>
<feature type="sequence conflict" description="In Ref. 2; BAB29685." evidence="13" ref="2">
    <original>P</original>
    <variation>L</variation>
    <location>
        <position position="1156"/>
    </location>
</feature>
<feature type="sequence conflict" description="In Ref. 2; BAB29685." evidence="13" ref="2">
    <original>P</original>
    <variation>S</variation>
    <location>
        <position position="1197"/>
    </location>
</feature>
<feature type="sequence conflict" description="In Ref. 2; BAB29685." evidence="13" ref="2">
    <original>P</original>
    <variation>S</variation>
    <location>
        <position position="1204"/>
    </location>
</feature>
<feature type="sequence conflict" description="In Ref. 2; BAB29685." evidence="13" ref="2">
    <original>PR</original>
    <variation>LM</variation>
    <location>
        <begin position="1210"/>
        <end position="1211"/>
    </location>
</feature>
<feature type="sequence conflict" description="In Ref. 2; BAB29685." evidence="13" ref="2">
    <original>H</original>
    <variation>Y</variation>
    <location>
        <position position="1219"/>
    </location>
</feature>
<feature type="sequence conflict" description="In Ref. 2; BAB29685." evidence="13" ref="2">
    <original>K</original>
    <variation>N</variation>
    <location>
        <position position="1222"/>
    </location>
</feature>
<feature type="sequence conflict" description="In Ref. 2; BAB29685." evidence="13" ref="2">
    <original>F</original>
    <variation>V</variation>
    <location>
        <position position="1252"/>
    </location>
</feature>
<accession>Q9EPQ2</accession>
<accession>Q8CAC2</accession>
<accession>Q8CDJ9</accession>
<accession>Q91WE0</accession>
<accession>Q9CUK6</accession>
<accession>Q9D5Q1</accession>
<sequence length="1331" mass="151996">MQHLLEYMPEDLPVRDTDSSPLLKGTSGKNVRAQPHLGRMNQKELNCRRLHLHEEPTLVKEPSPKQRDKNRRRRTNVQRSTTTQPDLRTLAVLQEPERRRRPWVSASPSPSAPPRAPVPGRKAHVQRLCPSTAVGSAQPRVHAGRRLPHIAGPNDRRSHTAPPAFKDYVADKNTRIEITREPSQLTHTMTTDSTHVEEIPRSPEKTSKVEKPEQRSSEECTQKAAELRASIKENVELIRLKKLLQERNTSLAATEAQLTRVQEAYEDLLQKNQGILDTAHNAFLSQVNELKAELSEESKKAVSLRTQLGDVSILQITLKEFQVRVEDLEKERKLLSDSYDRLLENMLDSSHQPLDSSHQPHWSTELTGKQLPPQVCPLLDQMGTALEETKVFRQATNKAAQDGKLKFQDTDILYQHEQEEESLQSTATVASSPEELCELAAQPTLLPQTDQRESSEPKAQDENDLSQVLSELQVSHAETTLELEKTRDMLLLQRKINMCYQEELEATLTKADRENRDHEEKLERLNHLLDFKNSRIKQLEGILRSHGLPTSEQLKDVAYGTLPPSLCLEPLAAHRGDDEVDMSLLHPSENLFELHVHQAFLTPAALTQAGDTQPTTFCTYSFYDFETHCTPLSTGPQPLYDFTSQYVVQADYLLLHYLQGTSVRLDLHQAMASEYHVLATGWISLDKVLGTVERVHGLATLAGAGGEDLGVLEYWMRLCLPLKPSLQACNKRKKAQAYLSVSVLGARKVQSNESRSETWAPQNELRVEITRCCGLRSRRLGRQPSPYVMYRFFTFPDHDTIIIPASSNPYFKDQALFPVLVTSDLDQYLRREALSVYVFDDEDPEPGSYLGRAQVPLLPLAQNKSIKGDFNLTDSGEKSNGSIKVQLDWKSHYLAPEGFQMSEAEKPEGEEKEEEGGEEEVKEEEVEEEEEEEEEEEEVKEEKEEEEEEEREEEEEKEEEKEEEEEEDEKEEEEEEEEEEEEEEEDENKDVLEASFTEEWVPFFSQDQIASTEIPIEAGQYPEKRKPPVIAEKKEREHQVASYSRRKHSKKPGVQDKNRMEYLSCNILNGNTQQMHYTEWKFSGLKKAEDGGLKAQDKREEPPSPRSALRQEHPSHPRNAFSLADQESCEQASEVSETQTTDSDDIIVTPQAQTVPKADSEKMCIEIVSLAFCPEADVMSDETIQQVYVEYKFCDLPLSETETPMSLRKPRAGEEIHFHFSKVIDLDPVEHQSRRQFLFAMLHAQDSDEGRFKFTVVSDPLDEEKKECQDIGYAYLELWQIFQSGKDILEQELEIVSPRNQAIQIGRLKVSLQAAAALHGIYKEMTEDLFS</sequence>
<dbReference type="EMBL" id="AY008297">
    <property type="protein sequence ID" value="AAG22857.1"/>
    <property type="molecule type" value="mRNA"/>
</dbReference>
<dbReference type="EMBL" id="AK015037">
    <property type="protein sequence ID" value="BAB29685.1"/>
    <property type="molecule type" value="mRNA"/>
</dbReference>
<dbReference type="EMBL" id="AK015701">
    <property type="protein sequence ID" value="BAB29938.1"/>
    <property type="molecule type" value="mRNA"/>
</dbReference>
<dbReference type="EMBL" id="AK029955">
    <property type="protein sequence ID" value="BAC26697.1"/>
    <property type="molecule type" value="mRNA"/>
</dbReference>
<dbReference type="EMBL" id="AK039097">
    <property type="protein sequence ID" value="BAC30237.1"/>
    <property type="molecule type" value="mRNA"/>
</dbReference>
<dbReference type="EMBL" id="BC016092">
    <property type="protein sequence ID" value="AAH16092.1"/>
    <property type="molecule type" value="mRNA"/>
</dbReference>
<dbReference type="CCDS" id="CCDS36918.1">
    <molecule id="Q9EPQ2-1"/>
</dbReference>
<dbReference type="RefSeq" id="NP_001161987.1">
    <property type="nucleotide sequence ID" value="NM_001168515.1"/>
</dbReference>
<dbReference type="RefSeq" id="NP_076368.1">
    <molecule id="Q9EPQ2-1"/>
    <property type="nucleotide sequence ID" value="NM_023879.3"/>
</dbReference>
<dbReference type="RefSeq" id="XP_006519759.1">
    <molecule id="Q9EPQ2-3"/>
    <property type="nucleotide sequence ID" value="XM_006519696.5"/>
</dbReference>
<dbReference type="SMR" id="Q9EPQ2"/>
<dbReference type="BioGRID" id="219040">
    <property type="interactions" value="6"/>
</dbReference>
<dbReference type="FunCoup" id="Q9EPQ2">
    <property type="interactions" value="64"/>
</dbReference>
<dbReference type="IntAct" id="Q9EPQ2">
    <property type="interactions" value="2"/>
</dbReference>
<dbReference type="STRING" id="10090.ENSMUSP00000107230"/>
<dbReference type="GlyGen" id="Q9EPQ2">
    <property type="glycosylation" value="2 sites, 2 N-linked glycans (2 sites)"/>
</dbReference>
<dbReference type="iPTMnet" id="Q9EPQ2"/>
<dbReference type="PhosphoSitePlus" id="Q9EPQ2"/>
<dbReference type="SwissPalm" id="Q9EPQ2"/>
<dbReference type="jPOST" id="Q9EPQ2"/>
<dbReference type="PaxDb" id="10090-ENSMUSP00000107230"/>
<dbReference type="ProteomicsDB" id="299875">
    <molecule id="Q9EPQ2-1"/>
</dbReference>
<dbReference type="ProteomicsDB" id="299876">
    <molecule id="Q9EPQ2-2"/>
</dbReference>
<dbReference type="ProteomicsDB" id="299877">
    <molecule id="Q9EPQ2-3"/>
</dbReference>
<dbReference type="ProteomicsDB" id="299878">
    <molecule id="Q9EPQ2-4"/>
</dbReference>
<dbReference type="ProteomicsDB" id="299879">
    <molecule id="Q9EPQ2-5"/>
</dbReference>
<dbReference type="Antibodypedia" id="47230">
    <property type="antibodies" value="100 antibodies from 23 providers"/>
</dbReference>
<dbReference type="DNASU" id="77945"/>
<dbReference type="Ensembl" id="ENSMUST00000111603.10">
    <molecule id="Q9EPQ2-1"/>
    <property type="protein sequence ID" value="ENSMUSP00000107230.3"/>
    <property type="gene ID" value="ENSMUSG00000057132.17"/>
</dbReference>
<dbReference type="GeneID" id="77945"/>
<dbReference type="KEGG" id="mmu:77945"/>
<dbReference type="UCSC" id="uc007tok.2">
    <molecule id="Q9EPQ2-1"/>
    <property type="organism name" value="mouse"/>
</dbReference>
<dbReference type="UCSC" id="uc007ton.1">
    <molecule id="Q9EPQ2-4"/>
    <property type="organism name" value="mouse"/>
</dbReference>
<dbReference type="UCSC" id="uc007too.1">
    <molecule id="Q9EPQ2-3"/>
    <property type="organism name" value="mouse"/>
</dbReference>
<dbReference type="UCSC" id="uc011zkl.1">
    <molecule id="Q9EPQ2-5"/>
    <property type="organism name" value="mouse"/>
</dbReference>
<dbReference type="AGR" id="MGI:1932134"/>
<dbReference type="CTD" id="57096"/>
<dbReference type="MGI" id="MGI:1932134">
    <property type="gene designation" value="Rpgrip1"/>
</dbReference>
<dbReference type="VEuPathDB" id="HostDB:ENSMUSG00000057132"/>
<dbReference type="eggNOG" id="ENOG502QSQG">
    <property type="taxonomic scope" value="Eukaryota"/>
</dbReference>
<dbReference type="GeneTree" id="ENSGT00520000055620"/>
<dbReference type="HOGENOM" id="CLU_002108_1_0_1"/>
<dbReference type="InParanoid" id="Q9EPQ2"/>
<dbReference type="OMA" id="NTLAAGW"/>
<dbReference type="OrthoDB" id="2133912at2759"/>
<dbReference type="PhylomeDB" id="Q9EPQ2"/>
<dbReference type="TreeFam" id="TF328883"/>
<dbReference type="BioGRID-ORCS" id="77945">
    <property type="hits" value="1 hit in 80 CRISPR screens"/>
</dbReference>
<dbReference type="ChiTaRS" id="Rpgrip1">
    <property type="organism name" value="mouse"/>
</dbReference>
<dbReference type="PRO" id="PR:Q9EPQ2"/>
<dbReference type="Proteomes" id="UP000000589">
    <property type="component" value="Chromosome 14"/>
</dbReference>
<dbReference type="RNAct" id="Q9EPQ2">
    <property type="molecule type" value="protein"/>
</dbReference>
<dbReference type="Bgee" id="ENSMUSG00000057132">
    <property type="expression patterns" value="Expressed in retinal neural layer and 230 other cell types or tissues"/>
</dbReference>
<dbReference type="ExpressionAtlas" id="Q9EPQ2">
    <property type="expression patterns" value="baseline and differential"/>
</dbReference>
<dbReference type="GO" id="GO:0005930">
    <property type="term" value="C:axoneme"/>
    <property type="evidence" value="ECO:0000314"/>
    <property type="project" value="MGI"/>
</dbReference>
<dbReference type="GO" id="GO:0005929">
    <property type="term" value="C:cilium"/>
    <property type="evidence" value="ECO:0000314"/>
    <property type="project" value="MGI"/>
</dbReference>
<dbReference type="GO" id="GO:0005829">
    <property type="term" value="C:cytosol"/>
    <property type="evidence" value="ECO:0007669"/>
    <property type="project" value="Ensembl"/>
</dbReference>
<dbReference type="GO" id="GO:0045171">
    <property type="term" value="C:intercellular bridge"/>
    <property type="evidence" value="ECO:0007669"/>
    <property type="project" value="Ensembl"/>
</dbReference>
<dbReference type="GO" id="GO:0043231">
    <property type="term" value="C:intracellular membrane-bounded organelle"/>
    <property type="evidence" value="ECO:0007669"/>
    <property type="project" value="Ensembl"/>
</dbReference>
<dbReference type="GO" id="GO:0015630">
    <property type="term" value="C:microtubule cytoskeleton"/>
    <property type="evidence" value="ECO:0007669"/>
    <property type="project" value="Ensembl"/>
</dbReference>
<dbReference type="GO" id="GO:0043005">
    <property type="term" value="C:neuron projection"/>
    <property type="evidence" value="ECO:0000314"/>
    <property type="project" value="MGI"/>
</dbReference>
<dbReference type="GO" id="GO:0097730">
    <property type="term" value="C:non-motile cilium"/>
    <property type="evidence" value="ECO:0000314"/>
    <property type="project" value="MGI"/>
</dbReference>
<dbReference type="GO" id="GO:0032391">
    <property type="term" value="C:photoreceptor connecting cilium"/>
    <property type="evidence" value="ECO:0000314"/>
    <property type="project" value="UniProtKB"/>
</dbReference>
<dbReference type="GO" id="GO:0120206">
    <property type="term" value="C:photoreceptor distal connecting cilium"/>
    <property type="evidence" value="ECO:0000314"/>
    <property type="project" value="MGI"/>
</dbReference>
<dbReference type="GO" id="GO:0042462">
    <property type="term" value="P:eye photoreceptor cell development"/>
    <property type="evidence" value="ECO:0000315"/>
    <property type="project" value="MGI"/>
</dbReference>
<dbReference type="GO" id="GO:0061351">
    <property type="term" value="P:neural precursor cell proliferation"/>
    <property type="evidence" value="ECO:0000315"/>
    <property type="project" value="MGI"/>
</dbReference>
<dbReference type="GO" id="GO:0060041">
    <property type="term" value="P:retina development in camera-type eye"/>
    <property type="evidence" value="ECO:0000315"/>
    <property type="project" value="MGI"/>
</dbReference>
<dbReference type="GO" id="GO:0007601">
    <property type="term" value="P:visual perception"/>
    <property type="evidence" value="ECO:0000315"/>
    <property type="project" value="MGI"/>
</dbReference>
<dbReference type="CDD" id="cd00030">
    <property type="entry name" value="C2"/>
    <property type="match status" value="1"/>
</dbReference>
<dbReference type="FunFam" id="2.60.40.150:FF:000073">
    <property type="entry name" value="protein fantom isoform X1"/>
    <property type="match status" value="1"/>
</dbReference>
<dbReference type="FunFam" id="2.60.40.150:FF:000075">
    <property type="entry name" value="protein fantom isoform X1"/>
    <property type="match status" value="1"/>
</dbReference>
<dbReference type="FunFam" id="2.60.40.150:FF:000189">
    <property type="entry name" value="X-linked retinitis pigmentosa GTPase regulator-interacting protein 1"/>
    <property type="match status" value="1"/>
</dbReference>
<dbReference type="Gene3D" id="2.60.40.150">
    <property type="entry name" value="C2 domain"/>
    <property type="match status" value="3"/>
</dbReference>
<dbReference type="InterPro" id="IPR021656">
    <property type="entry name" value="C2-C2_1"/>
</dbReference>
<dbReference type="InterPro" id="IPR000008">
    <property type="entry name" value="C2_dom"/>
</dbReference>
<dbReference type="InterPro" id="IPR035892">
    <property type="entry name" value="C2_domain_sf"/>
</dbReference>
<dbReference type="InterPro" id="IPR041091">
    <property type="entry name" value="RPGRIP1_C"/>
</dbReference>
<dbReference type="InterPro" id="IPR031139">
    <property type="entry name" value="RPGRIP1_fam"/>
</dbReference>
<dbReference type="PANTHER" id="PTHR14240">
    <property type="entry name" value="RETINITIS PIGMENTOSA GTPASE REGULATOR-INTERACTING PROTEIN"/>
    <property type="match status" value="1"/>
</dbReference>
<dbReference type="PANTHER" id="PTHR14240:SF3">
    <property type="entry name" value="X-LINKED RETINITIS PIGMENTOSA GTPASE REGULATOR-INTERACTING PROTEIN 1"/>
    <property type="match status" value="1"/>
</dbReference>
<dbReference type="Pfam" id="PF00168">
    <property type="entry name" value="C2"/>
    <property type="match status" value="1"/>
</dbReference>
<dbReference type="Pfam" id="PF11618">
    <property type="entry name" value="C2-C2_1"/>
    <property type="match status" value="1"/>
</dbReference>
<dbReference type="Pfam" id="PF18111">
    <property type="entry name" value="RPGR1_C"/>
    <property type="match status" value="1"/>
</dbReference>
<dbReference type="SUPFAM" id="SSF49562">
    <property type="entry name" value="C2 domain (Calcium/lipid-binding domain, CaLB)"/>
    <property type="match status" value="2"/>
</dbReference>
<dbReference type="PROSITE" id="PS50004">
    <property type="entry name" value="C2"/>
    <property type="match status" value="1"/>
</dbReference>
<keyword id="KW-0025">Alternative splicing</keyword>
<keyword id="KW-0966">Cell projection</keyword>
<keyword id="KW-0969">Cilium</keyword>
<keyword id="KW-0175">Coiled coil</keyword>
<keyword id="KW-1185">Reference proteome</keyword>
<keyword id="KW-0716">Sensory transduction</keyword>
<keyword id="KW-0844">Vision</keyword>
<organism>
    <name type="scientific">Mus musculus</name>
    <name type="common">Mouse</name>
    <dbReference type="NCBI Taxonomy" id="10090"/>
    <lineage>
        <taxon>Eukaryota</taxon>
        <taxon>Metazoa</taxon>
        <taxon>Chordata</taxon>
        <taxon>Craniata</taxon>
        <taxon>Vertebrata</taxon>
        <taxon>Euteleostomi</taxon>
        <taxon>Mammalia</taxon>
        <taxon>Eutheria</taxon>
        <taxon>Euarchontoglires</taxon>
        <taxon>Glires</taxon>
        <taxon>Rodentia</taxon>
        <taxon>Myomorpha</taxon>
        <taxon>Muroidea</taxon>
        <taxon>Muridae</taxon>
        <taxon>Murinae</taxon>
        <taxon>Mus</taxon>
        <taxon>Mus</taxon>
    </lineage>
</organism>
<gene>
    <name type="primary">Rpgrip1</name>
</gene>
<reference key="1">
    <citation type="journal article" date="2001" name="J. Biol. Chem.">
        <title>Retinitis pigmentosa GTPase regulator (RPGR)-interacting protein is stably associated with the photoreceptor ciliary axoneme and anchors RPGR to the connecting cilium.</title>
        <authorList>
            <person name="Hong D.H."/>
            <person name="Yue G."/>
            <person name="Adamian M."/>
            <person name="Li T."/>
        </authorList>
    </citation>
    <scope>NUCLEOTIDE SEQUENCE [MRNA] (ISOFORM 1)</scope>
    <scope>INTERACTION WITH RPGR</scope>
    <scope>SUBCELLULAR LOCATION</scope>
    <scope>TISSUE SPECIFICITY</scope>
    <source>
        <strain>C57BL/6J</strain>
    </source>
</reference>
<reference key="2">
    <citation type="journal article" date="2005" name="Science">
        <title>The transcriptional landscape of the mammalian genome.</title>
        <authorList>
            <person name="Carninci P."/>
            <person name="Kasukawa T."/>
            <person name="Katayama S."/>
            <person name="Gough J."/>
            <person name="Frith M.C."/>
            <person name="Maeda N."/>
            <person name="Oyama R."/>
            <person name="Ravasi T."/>
            <person name="Lenhard B."/>
            <person name="Wells C."/>
            <person name="Kodzius R."/>
            <person name="Shimokawa K."/>
            <person name="Bajic V.B."/>
            <person name="Brenner S.E."/>
            <person name="Batalov S."/>
            <person name="Forrest A.R."/>
            <person name="Zavolan M."/>
            <person name="Davis M.J."/>
            <person name="Wilming L.G."/>
            <person name="Aidinis V."/>
            <person name="Allen J.E."/>
            <person name="Ambesi-Impiombato A."/>
            <person name="Apweiler R."/>
            <person name="Aturaliya R.N."/>
            <person name="Bailey T.L."/>
            <person name="Bansal M."/>
            <person name="Baxter L."/>
            <person name="Beisel K.W."/>
            <person name="Bersano T."/>
            <person name="Bono H."/>
            <person name="Chalk A.M."/>
            <person name="Chiu K.P."/>
            <person name="Choudhary V."/>
            <person name="Christoffels A."/>
            <person name="Clutterbuck D.R."/>
            <person name="Crowe M.L."/>
            <person name="Dalla E."/>
            <person name="Dalrymple B.P."/>
            <person name="de Bono B."/>
            <person name="Della Gatta G."/>
            <person name="di Bernardo D."/>
            <person name="Down T."/>
            <person name="Engstrom P."/>
            <person name="Fagiolini M."/>
            <person name="Faulkner G."/>
            <person name="Fletcher C.F."/>
            <person name="Fukushima T."/>
            <person name="Furuno M."/>
            <person name="Futaki S."/>
            <person name="Gariboldi M."/>
            <person name="Georgii-Hemming P."/>
            <person name="Gingeras T.R."/>
            <person name="Gojobori T."/>
            <person name="Green R.E."/>
            <person name="Gustincich S."/>
            <person name="Harbers M."/>
            <person name="Hayashi Y."/>
            <person name="Hensch T.K."/>
            <person name="Hirokawa N."/>
            <person name="Hill D."/>
            <person name="Huminiecki L."/>
            <person name="Iacono M."/>
            <person name="Ikeo K."/>
            <person name="Iwama A."/>
            <person name="Ishikawa T."/>
            <person name="Jakt M."/>
            <person name="Kanapin A."/>
            <person name="Katoh M."/>
            <person name="Kawasawa Y."/>
            <person name="Kelso J."/>
            <person name="Kitamura H."/>
            <person name="Kitano H."/>
            <person name="Kollias G."/>
            <person name="Krishnan S.P."/>
            <person name="Kruger A."/>
            <person name="Kummerfeld S.K."/>
            <person name="Kurochkin I.V."/>
            <person name="Lareau L.F."/>
            <person name="Lazarevic D."/>
            <person name="Lipovich L."/>
            <person name="Liu J."/>
            <person name="Liuni S."/>
            <person name="McWilliam S."/>
            <person name="Madan Babu M."/>
            <person name="Madera M."/>
            <person name="Marchionni L."/>
            <person name="Matsuda H."/>
            <person name="Matsuzawa S."/>
            <person name="Miki H."/>
            <person name="Mignone F."/>
            <person name="Miyake S."/>
            <person name="Morris K."/>
            <person name="Mottagui-Tabar S."/>
            <person name="Mulder N."/>
            <person name="Nakano N."/>
            <person name="Nakauchi H."/>
            <person name="Ng P."/>
            <person name="Nilsson R."/>
            <person name="Nishiguchi S."/>
            <person name="Nishikawa S."/>
            <person name="Nori F."/>
            <person name="Ohara O."/>
            <person name="Okazaki Y."/>
            <person name="Orlando V."/>
            <person name="Pang K.C."/>
            <person name="Pavan W.J."/>
            <person name="Pavesi G."/>
            <person name="Pesole G."/>
            <person name="Petrovsky N."/>
            <person name="Piazza S."/>
            <person name="Reed J."/>
            <person name="Reid J.F."/>
            <person name="Ring B.Z."/>
            <person name="Ringwald M."/>
            <person name="Rost B."/>
            <person name="Ruan Y."/>
            <person name="Salzberg S.L."/>
            <person name="Sandelin A."/>
            <person name="Schneider C."/>
            <person name="Schoenbach C."/>
            <person name="Sekiguchi K."/>
            <person name="Semple C.A."/>
            <person name="Seno S."/>
            <person name="Sessa L."/>
            <person name="Sheng Y."/>
            <person name="Shibata Y."/>
            <person name="Shimada H."/>
            <person name="Shimada K."/>
            <person name="Silva D."/>
            <person name="Sinclair B."/>
            <person name="Sperling S."/>
            <person name="Stupka E."/>
            <person name="Sugiura K."/>
            <person name="Sultana R."/>
            <person name="Takenaka Y."/>
            <person name="Taki K."/>
            <person name="Tammoja K."/>
            <person name="Tan S.L."/>
            <person name="Tang S."/>
            <person name="Taylor M.S."/>
            <person name="Tegner J."/>
            <person name="Teichmann S.A."/>
            <person name="Ueda H.R."/>
            <person name="van Nimwegen E."/>
            <person name="Verardo R."/>
            <person name="Wei C.L."/>
            <person name="Yagi K."/>
            <person name="Yamanishi H."/>
            <person name="Zabarovsky E."/>
            <person name="Zhu S."/>
            <person name="Zimmer A."/>
            <person name="Hide W."/>
            <person name="Bult C."/>
            <person name="Grimmond S.M."/>
            <person name="Teasdale R.D."/>
            <person name="Liu E.T."/>
            <person name="Brusic V."/>
            <person name="Quackenbush J."/>
            <person name="Wahlestedt C."/>
            <person name="Mattick J.S."/>
            <person name="Hume D.A."/>
            <person name="Kai C."/>
            <person name="Sasaki D."/>
            <person name="Tomaru Y."/>
            <person name="Fukuda S."/>
            <person name="Kanamori-Katayama M."/>
            <person name="Suzuki M."/>
            <person name="Aoki J."/>
            <person name="Arakawa T."/>
            <person name="Iida J."/>
            <person name="Imamura K."/>
            <person name="Itoh M."/>
            <person name="Kato T."/>
            <person name="Kawaji H."/>
            <person name="Kawagashira N."/>
            <person name="Kawashima T."/>
            <person name="Kojima M."/>
            <person name="Kondo S."/>
            <person name="Konno H."/>
            <person name="Nakano K."/>
            <person name="Ninomiya N."/>
            <person name="Nishio T."/>
            <person name="Okada M."/>
            <person name="Plessy C."/>
            <person name="Shibata K."/>
            <person name="Shiraki T."/>
            <person name="Suzuki S."/>
            <person name="Tagami M."/>
            <person name="Waki K."/>
            <person name="Watahiki A."/>
            <person name="Okamura-Oho Y."/>
            <person name="Suzuki H."/>
            <person name="Kawai J."/>
            <person name="Hayashizaki Y."/>
        </authorList>
    </citation>
    <scope>NUCLEOTIDE SEQUENCE [LARGE SCALE MRNA] (ISOFORMS 3; 4 AND 5)</scope>
    <source>
        <strain>C57BL/6J</strain>
        <tissue>Hypothalamus</tissue>
        <tissue>Testis</tissue>
    </source>
</reference>
<reference key="3">
    <citation type="journal article" date="2004" name="Genome Res.">
        <title>The status, quality, and expansion of the NIH full-length cDNA project: the Mammalian Gene Collection (MGC).</title>
        <authorList>
            <consortium name="The MGC Project Team"/>
        </authorList>
    </citation>
    <scope>NUCLEOTIDE SEQUENCE [LARGE SCALE MRNA] (ISOFORM 2)</scope>
    <source>
        <tissue>Eye</tissue>
        <tissue>Retina</tissue>
    </source>
</reference>
<reference key="4">
    <citation type="journal article" date="2002" name="Hum. Mol. Genet.">
        <title>Species-specific subcellular localization of RPGR and RPGRIP isoforms: implications for the phenotypic variability of congenital retinopathies among species.</title>
        <authorList>
            <person name="Mavlyutov T.A."/>
            <person name="Zhao H."/>
            <person name="Ferreira P.A."/>
        </authorList>
    </citation>
    <scope>SUBCELLULAR LOCATION</scope>
    <scope>TISSUE SPECIFICITY</scope>
</reference>
<reference key="5">
    <citation type="journal article" date="2003" name="Proc. Natl. Acad. Sci. U.S.A.">
        <title>The retinitis pigmentosa GTPase regulator (RPGR)-interacting protein: subserving RPGR function and participating in disk morphogenesis.</title>
        <authorList>
            <person name="Zhao Y."/>
            <person name="Hong D.-H."/>
            <person name="Pawlyk B."/>
            <person name="Yue G."/>
            <person name="Adamian M."/>
            <person name="Grynberg M."/>
            <person name="Godzik A."/>
            <person name="Li T."/>
        </authorList>
    </citation>
    <scope>FUNCTION</scope>
    <scope>SUBUNIT</scope>
    <scope>INTERACTION WITH RPGR</scope>
    <scope>SUBCELLULAR LOCATION</scope>
    <scope>TISSUE SPECIFICITY</scope>
    <scope>DISRUPTION PHENOTYPE</scope>
</reference>
<reference key="6">
    <citation type="journal article" date="2015" name="Hum. Mol. Genet.">
        <title>Spata7 is a retinal ciliopathy gene critical for correct RPGRIP1 localization and protein trafficking in the retina.</title>
        <authorList>
            <person name="Eblimit A."/>
            <person name="Nguyen T.M."/>
            <person name="Chen Y."/>
            <person name="Esteve-Rudd J."/>
            <person name="Zhong H."/>
            <person name="Letteboer S."/>
            <person name="van Reeuwijk J."/>
            <person name="Simons D.L."/>
            <person name="Ding Q."/>
            <person name="Wu K.M."/>
            <person name="Li Y."/>
            <person name="van Beersum S."/>
            <person name="Moayedi Y."/>
            <person name="Xu H."/>
            <person name="Pickard P."/>
            <person name="Wang K."/>
            <person name="Gan L."/>
            <person name="Wu S.M."/>
            <person name="Williams D.S."/>
            <person name="Mardon G."/>
            <person name="Roepman R."/>
            <person name="Chen R."/>
        </authorList>
    </citation>
    <scope>INTERACTION WITH SPATA7</scope>
</reference>
<reference key="7">
    <citation type="journal article" date="2018" name="Exp. Eye Res.">
        <title>Conditional loss of Spata7 in photoreceptors causes progressive retinal degeneration in mice.</title>
        <authorList>
            <person name="Eblimit A."/>
            <person name="Agrawal S.A."/>
            <person name="Thomas K."/>
            <person name="Anastassov I.A."/>
            <person name="Abulikemu T."/>
            <person name="Mardon G."/>
            <person name="Chen R."/>
        </authorList>
    </citation>
    <scope>SUBCELLULAR LOCATION</scope>
    <scope>TISSUE SPECIFICITY</scope>
</reference>
<reference key="8">
    <citation type="journal article" date="2018" name="J. Cell Biol.">
        <title>SPATA7 maintains a novel photoreceptor-specific zone in the distal connecting cilium.</title>
        <authorList>
            <person name="Dharmat R."/>
            <person name="Eblimit A."/>
            <person name="Robichaux M.A."/>
            <person name="Zhang Z."/>
            <person name="Nguyen T.T."/>
            <person name="Jung S.Y."/>
            <person name="He F."/>
            <person name="Jain A."/>
            <person name="Li Y."/>
            <person name="Qin J."/>
            <person name="Overbeek P."/>
            <person name="Roepman R."/>
            <person name="Mardon G."/>
            <person name="Wensel T.G."/>
            <person name="Chen R."/>
        </authorList>
    </citation>
    <scope>INTERACTION WITH SPATA7</scope>
    <scope>SUBCELLULAR LOCATION</scope>
    <scope>TISSUE SPECIFICITY</scope>
</reference>
<comment type="function">
    <text evidence="7">May function as scaffolding protein. Required for normal location of RPGR at the connecting cilium of photoreceptor cells. Required for normal disk morphogenesis and disk organization in the outer segment of photoreceptor cells and for survival of photoreceptor cells.</text>
</comment>
<comment type="subunit">
    <text evidence="1 5 7 8 10">Interacts with NPHP4. Interacts with NEK4 (By similarity). Forms homodimers and elongated homopolymers (PubMed:12651948). Interacts with RPGR (PubMed:11104772). Interacts with SPATA7 (PubMed:25398945, PubMed:29899041). Interacts with CEP290/NPHP6; mediating the association between RPGR and CEP290/NPHP6 (By similarity).</text>
</comment>
<comment type="subcellular location">
    <subcellularLocation>
        <location evidence="5 7 9">Cell projection</location>
        <location evidence="5 7 9">Cilium</location>
    </subcellularLocation>
    <text evidence="5 6 7 9 10">Situated between the axonemal microtubules and the plasma membrane (PubMed:11104772, PubMed:12651948). In the retinal photoreceptor cell layer, localizes at the connecting cilium, a thin bridge linking the cell body and the light-sensing outer segment (PubMed:29100828, PubMed:29899041). Colocalizes with RGPR in the photoreceptor connecting cilium (PubMed:11104772, PubMed:12140192, PubMed:12651948).</text>
</comment>
<comment type="alternative products">
    <event type="alternative splicing"/>
    <isoform>
        <id>Q9EPQ2-1</id>
        <name>1</name>
        <sequence type="displayed"/>
    </isoform>
    <isoform>
        <id>Q9EPQ2-2</id>
        <name>2</name>
        <sequence type="described" ref="VSP_009531 VSP_009532 VSP_009535"/>
    </isoform>
    <isoform>
        <id>Q9EPQ2-3</id>
        <name>3</name>
        <sequence type="described" ref="VSP_009528 VSP_009530 VSP_009531 VSP_009534"/>
    </isoform>
    <isoform>
        <id>Q9EPQ2-4</id>
        <name>4</name>
        <sequence type="described" ref="VSP_009528 VSP_009530 VSP_009533"/>
    </isoform>
    <isoform>
        <id>Q9EPQ2-5</id>
        <name>5</name>
        <sequence type="described" ref="VSP_009529"/>
    </isoform>
</comment>
<comment type="tissue specificity">
    <text evidence="5 6 7 9 10">Expressed in the retina (at protein level).</text>
</comment>
<comment type="domain">
    <text evidence="1">The C2 domain does not bind calcium ions, and does not bind phosphoinositides.</text>
</comment>
<comment type="disruption phenotype">
    <text evidence="7">Mutant mice are born at the expected Mendelian rate, appear healthy and are fertile. They have initially a complete set of photoreceptor cells in the retina, but the photoreceptor cells present defects in the outer segments indicative of cell death, and loss of photoreceptor cells is almost complete after three months.</text>
</comment>
<comment type="similarity">
    <text evidence="13">Belongs to the RPGRIP1 family.</text>
</comment>
<name>RPGR1_MOUSE</name>